<sequence length="202" mass="23279">MEITSAEFVISNTDVKKCPTGVFPEYAFIGRSNVGKSSLINMLTARKGLAMTSATPGKTMLINHFLINQSWYLVDLPGYGYARRGQKGKDQIRTIIEDYILEREQMTNLFVLIDSRLEPQKIDLEFMEWLGENGIPFSIIFTKADKLKGGRLKMNINNYLRELSKEWEELPPYFISSSENRTGRTEILDYIENISKEVYKNK</sequence>
<keyword id="KW-0131">Cell cycle</keyword>
<keyword id="KW-0132">Cell division</keyword>
<keyword id="KW-0342">GTP-binding</keyword>
<keyword id="KW-0460">Magnesium</keyword>
<keyword id="KW-0479">Metal-binding</keyword>
<keyword id="KW-0547">Nucleotide-binding</keyword>
<keyword id="KW-1185">Reference proteome</keyword>
<keyword id="KW-0717">Septation</keyword>
<protein>
    <recommendedName>
        <fullName evidence="1">Probable GTP-binding protein EngB</fullName>
    </recommendedName>
</protein>
<accession>Q8A8T4</accession>
<name>ENGB_BACTN</name>
<gene>
    <name evidence="1" type="primary">engB</name>
    <name type="ordered locus">BT_1083</name>
</gene>
<evidence type="ECO:0000255" key="1">
    <source>
        <dbReference type="HAMAP-Rule" id="MF_00321"/>
    </source>
</evidence>
<reference key="1">
    <citation type="journal article" date="2003" name="Science">
        <title>A genomic view of the human-Bacteroides thetaiotaomicron symbiosis.</title>
        <authorList>
            <person name="Xu J."/>
            <person name="Bjursell M.K."/>
            <person name="Himrod J."/>
            <person name="Deng S."/>
            <person name="Carmichael L.K."/>
            <person name="Chiang H.C."/>
            <person name="Hooper L.V."/>
            <person name="Gordon J.I."/>
        </authorList>
    </citation>
    <scope>NUCLEOTIDE SEQUENCE [LARGE SCALE GENOMIC DNA]</scope>
    <source>
        <strain>ATCC 29148 / DSM 2079 / JCM 5827 / CCUG 10774 / NCTC 10582 / VPI-5482 / E50</strain>
    </source>
</reference>
<dbReference type="EMBL" id="AE015928">
    <property type="protein sequence ID" value="AAO76190.1"/>
    <property type="molecule type" value="Genomic_DNA"/>
</dbReference>
<dbReference type="RefSeq" id="NP_809996.1">
    <property type="nucleotide sequence ID" value="NC_004663.1"/>
</dbReference>
<dbReference type="SMR" id="Q8A8T4"/>
<dbReference type="FunCoup" id="Q8A8T4">
    <property type="interactions" value="370"/>
</dbReference>
<dbReference type="STRING" id="226186.BT_1083"/>
<dbReference type="PaxDb" id="226186-BT_1083"/>
<dbReference type="EnsemblBacteria" id="AAO76190">
    <property type="protein sequence ID" value="AAO76190"/>
    <property type="gene ID" value="BT_1083"/>
</dbReference>
<dbReference type="KEGG" id="bth:BT_1083"/>
<dbReference type="PATRIC" id="fig|226186.12.peg.1101"/>
<dbReference type="eggNOG" id="COG0218">
    <property type="taxonomic scope" value="Bacteria"/>
</dbReference>
<dbReference type="HOGENOM" id="CLU_033732_3_1_10"/>
<dbReference type="InParanoid" id="Q8A8T4"/>
<dbReference type="OrthoDB" id="9804921at2"/>
<dbReference type="Proteomes" id="UP000001414">
    <property type="component" value="Chromosome"/>
</dbReference>
<dbReference type="GO" id="GO:0005525">
    <property type="term" value="F:GTP binding"/>
    <property type="evidence" value="ECO:0007669"/>
    <property type="project" value="UniProtKB-UniRule"/>
</dbReference>
<dbReference type="GO" id="GO:0046872">
    <property type="term" value="F:metal ion binding"/>
    <property type="evidence" value="ECO:0007669"/>
    <property type="project" value="UniProtKB-KW"/>
</dbReference>
<dbReference type="GO" id="GO:0000917">
    <property type="term" value="P:division septum assembly"/>
    <property type="evidence" value="ECO:0007669"/>
    <property type="project" value="UniProtKB-KW"/>
</dbReference>
<dbReference type="CDD" id="cd01876">
    <property type="entry name" value="YihA_EngB"/>
    <property type="match status" value="1"/>
</dbReference>
<dbReference type="FunFam" id="3.40.50.300:FF:000098">
    <property type="entry name" value="Probable GTP-binding protein EngB"/>
    <property type="match status" value="1"/>
</dbReference>
<dbReference type="Gene3D" id="3.40.50.300">
    <property type="entry name" value="P-loop containing nucleotide triphosphate hydrolases"/>
    <property type="match status" value="1"/>
</dbReference>
<dbReference type="HAMAP" id="MF_00321">
    <property type="entry name" value="GTPase_EngB"/>
    <property type="match status" value="1"/>
</dbReference>
<dbReference type="InterPro" id="IPR030393">
    <property type="entry name" value="G_ENGB_dom"/>
</dbReference>
<dbReference type="InterPro" id="IPR006073">
    <property type="entry name" value="GTP-bd"/>
</dbReference>
<dbReference type="InterPro" id="IPR019987">
    <property type="entry name" value="GTP-bd_ribosome_bio_YsxC"/>
</dbReference>
<dbReference type="InterPro" id="IPR027417">
    <property type="entry name" value="P-loop_NTPase"/>
</dbReference>
<dbReference type="NCBIfam" id="TIGR03598">
    <property type="entry name" value="GTPase_YsxC"/>
    <property type="match status" value="1"/>
</dbReference>
<dbReference type="PANTHER" id="PTHR11649:SF13">
    <property type="entry name" value="ENGB-TYPE G DOMAIN-CONTAINING PROTEIN"/>
    <property type="match status" value="1"/>
</dbReference>
<dbReference type="PANTHER" id="PTHR11649">
    <property type="entry name" value="MSS1/TRME-RELATED GTP-BINDING PROTEIN"/>
    <property type="match status" value="1"/>
</dbReference>
<dbReference type="Pfam" id="PF01926">
    <property type="entry name" value="MMR_HSR1"/>
    <property type="match status" value="1"/>
</dbReference>
<dbReference type="SUPFAM" id="SSF52540">
    <property type="entry name" value="P-loop containing nucleoside triphosphate hydrolases"/>
    <property type="match status" value="1"/>
</dbReference>
<dbReference type="PROSITE" id="PS51706">
    <property type="entry name" value="G_ENGB"/>
    <property type="match status" value="1"/>
</dbReference>
<organism>
    <name type="scientific">Bacteroides thetaiotaomicron (strain ATCC 29148 / DSM 2079 / JCM 5827 / CCUG 10774 / NCTC 10582 / VPI-5482 / E50)</name>
    <dbReference type="NCBI Taxonomy" id="226186"/>
    <lineage>
        <taxon>Bacteria</taxon>
        <taxon>Pseudomonadati</taxon>
        <taxon>Bacteroidota</taxon>
        <taxon>Bacteroidia</taxon>
        <taxon>Bacteroidales</taxon>
        <taxon>Bacteroidaceae</taxon>
        <taxon>Bacteroides</taxon>
    </lineage>
</organism>
<feature type="chain" id="PRO_0000266820" description="Probable GTP-binding protein EngB">
    <location>
        <begin position="1"/>
        <end position="202"/>
    </location>
</feature>
<feature type="domain" description="EngB-type G" evidence="1">
    <location>
        <begin position="22"/>
        <end position="197"/>
    </location>
</feature>
<feature type="binding site" evidence="1">
    <location>
        <begin position="30"/>
        <end position="37"/>
    </location>
    <ligand>
        <name>GTP</name>
        <dbReference type="ChEBI" id="CHEBI:37565"/>
    </ligand>
</feature>
<feature type="binding site" evidence="1">
    <location>
        <position position="37"/>
    </location>
    <ligand>
        <name>Mg(2+)</name>
        <dbReference type="ChEBI" id="CHEBI:18420"/>
    </ligand>
</feature>
<feature type="binding site" evidence="1">
    <location>
        <begin position="57"/>
        <end position="61"/>
    </location>
    <ligand>
        <name>GTP</name>
        <dbReference type="ChEBI" id="CHEBI:37565"/>
    </ligand>
</feature>
<feature type="binding site" evidence="1">
    <location>
        <position position="59"/>
    </location>
    <ligand>
        <name>Mg(2+)</name>
        <dbReference type="ChEBI" id="CHEBI:18420"/>
    </ligand>
</feature>
<feature type="binding site" evidence="1">
    <location>
        <begin position="75"/>
        <end position="78"/>
    </location>
    <ligand>
        <name>GTP</name>
        <dbReference type="ChEBI" id="CHEBI:37565"/>
    </ligand>
</feature>
<feature type="binding site" evidence="1">
    <location>
        <begin position="142"/>
        <end position="145"/>
    </location>
    <ligand>
        <name>GTP</name>
        <dbReference type="ChEBI" id="CHEBI:37565"/>
    </ligand>
</feature>
<feature type="binding site" evidence="1">
    <location>
        <begin position="173"/>
        <end position="178"/>
    </location>
    <ligand>
        <name>GTP</name>
        <dbReference type="ChEBI" id="CHEBI:37565"/>
    </ligand>
</feature>
<comment type="function">
    <text evidence="1">Necessary for normal cell division and for the maintenance of normal septation.</text>
</comment>
<comment type="cofactor">
    <cofactor evidence="1">
        <name>Mg(2+)</name>
        <dbReference type="ChEBI" id="CHEBI:18420"/>
    </cofactor>
</comment>
<comment type="similarity">
    <text evidence="1">Belongs to the TRAFAC class TrmE-Era-EngA-EngB-Septin-like GTPase superfamily. EngB GTPase family.</text>
</comment>
<proteinExistence type="inferred from homology"/>